<name>YR843_MIMIV</name>
<organism>
    <name type="scientific">Acanthamoeba polyphaga mimivirus</name>
    <name type="common">APMV</name>
    <dbReference type="NCBI Taxonomy" id="212035"/>
    <lineage>
        <taxon>Viruses</taxon>
        <taxon>Varidnaviria</taxon>
        <taxon>Bamfordvirae</taxon>
        <taxon>Nucleocytoviricota</taxon>
        <taxon>Megaviricetes</taxon>
        <taxon>Imitervirales</taxon>
        <taxon>Mimiviridae</taxon>
        <taxon>Megamimivirinae</taxon>
        <taxon>Mimivirus</taxon>
        <taxon>Mimivirus bradfordmassiliense</taxon>
    </lineage>
</organism>
<proteinExistence type="inferred from homology"/>
<comment type="similarity">
    <text evidence="2">Belongs to the AB hydrolase superfamily. AB hydrolase 2 family.</text>
</comment>
<evidence type="ECO:0000255" key="1">
    <source>
        <dbReference type="PROSITE-ProRule" id="PRU10037"/>
    </source>
</evidence>
<evidence type="ECO:0000305" key="2"/>
<sequence length="312" mass="36132">MDNDDYIWLDYLTVEQPNQEKTDISVKHYYGIDIKTDKYLQNAIDIWELINKYGKKYFCNYGGETFQINIGDRFYVAHFPSQCLNNGCKYPVLIFLHGLTGYSWHSALDKTGLIELANQNNFIVLFGQGNGEITRPVRDKYGGVSFGDIYWQIENPELDMDYIRNVMNLQGTIEYCRQDDLNLLELRKMFSDKIYLIGYSNGAMYSFNMCFYDLHFSGICSMMGGYGGLAGYSNSKISEIVDRPINISLDIPIIILSGSLDEYLPASKKAFDILLGKNFSNVKFLSIPDRKHTYSRDFEKYIWEFFFTSTKN</sequence>
<feature type="chain" id="PRO_0000309580" description="Uncharacterized hydrolase R843">
    <location>
        <begin position="1"/>
        <end position="312"/>
    </location>
</feature>
<feature type="active site" description="Charge relay system" evidence="1">
    <location>
        <position position="200"/>
    </location>
</feature>
<feature type="active site" description="Charge relay system" evidence="1">
    <location>
        <position position="261"/>
    </location>
</feature>
<feature type="active site" description="Charge relay system" evidence="1">
    <location>
        <position position="292"/>
    </location>
</feature>
<protein>
    <recommendedName>
        <fullName>Uncharacterized hydrolase R843</fullName>
        <ecNumber>3.-.-.-</ecNumber>
    </recommendedName>
</protein>
<gene>
    <name type="ordered locus">MIMI_R843</name>
</gene>
<accession>Q5URB6</accession>
<keyword id="KW-0378">Hydrolase</keyword>
<keyword id="KW-1185">Reference proteome</keyword>
<reference key="1">
    <citation type="journal article" date="2004" name="Science">
        <title>The 1.2-megabase genome sequence of Mimivirus.</title>
        <authorList>
            <person name="Raoult D."/>
            <person name="Audic S."/>
            <person name="Robert C."/>
            <person name="Abergel C."/>
            <person name="Renesto P."/>
            <person name="Ogata H."/>
            <person name="La Scola B."/>
            <person name="Susan M."/>
            <person name="Claverie J.-M."/>
        </authorList>
    </citation>
    <scope>NUCLEOTIDE SEQUENCE [LARGE SCALE GENOMIC DNA]</scope>
    <source>
        <strain>Rowbotham-Bradford</strain>
    </source>
</reference>
<dbReference type="EC" id="3.-.-.-"/>
<dbReference type="EMBL" id="AY653733">
    <property type="protein sequence ID" value="AAV51101.1"/>
    <property type="molecule type" value="Genomic_DNA"/>
</dbReference>
<dbReference type="ESTHER" id="mimiv-q5urb6">
    <property type="family name" value="LYsophospholipase_carboxylesterase"/>
</dbReference>
<dbReference type="KEGG" id="vg:9925507"/>
<dbReference type="OrthoDB" id="17603at10239"/>
<dbReference type="Proteomes" id="UP000001134">
    <property type="component" value="Genome"/>
</dbReference>
<dbReference type="GO" id="GO:0016787">
    <property type="term" value="F:hydrolase activity"/>
    <property type="evidence" value="ECO:0007669"/>
    <property type="project" value="UniProtKB-KW"/>
</dbReference>
<dbReference type="Gene3D" id="3.40.50.1820">
    <property type="entry name" value="alpha/beta hydrolase"/>
    <property type="match status" value="1"/>
</dbReference>
<dbReference type="InterPro" id="IPR029058">
    <property type="entry name" value="AB_hydrolase_fold"/>
</dbReference>
<dbReference type="InterPro" id="IPR003140">
    <property type="entry name" value="PLipase/COase/thioEstase"/>
</dbReference>
<dbReference type="Pfam" id="PF02230">
    <property type="entry name" value="Abhydrolase_2"/>
    <property type="match status" value="1"/>
</dbReference>
<dbReference type="SUPFAM" id="SSF53474">
    <property type="entry name" value="alpha/beta-Hydrolases"/>
    <property type="match status" value="1"/>
</dbReference>
<dbReference type="PROSITE" id="PS00120">
    <property type="entry name" value="LIPASE_SER"/>
    <property type="match status" value="1"/>
</dbReference>
<organismHost>
    <name type="scientific">Acanthamoeba polyphaga</name>
    <name type="common">Amoeba</name>
    <dbReference type="NCBI Taxonomy" id="5757"/>
</organismHost>